<comment type="function">
    <text evidence="1">Involved in transcription antitermination. Required for transcription of ribosomal RNA (rRNA) genes. Binds specifically to the boxA antiterminator sequence of the ribosomal RNA (rrn) operons.</text>
</comment>
<comment type="similarity">
    <text evidence="1">Belongs to the NusB family.</text>
</comment>
<organism>
    <name type="scientific">Shewanella frigidimarina (strain NCIMB 400)</name>
    <dbReference type="NCBI Taxonomy" id="318167"/>
    <lineage>
        <taxon>Bacteria</taxon>
        <taxon>Pseudomonadati</taxon>
        <taxon>Pseudomonadota</taxon>
        <taxon>Gammaproteobacteria</taxon>
        <taxon>Alteromonadales</taxon>
        <taxon>Shewanellaceae</taxon>
        <taxon>Shewanella</taxon>
    </lineage>
</organism>
<proteinExistence type="inferred from homology"/>
<reference key="1">
    <citation type="submission" date="2006-08" db="EMBL/GenBank/DDBJ databases">
        <title>Complete sequence of Shewanella frigidimarina NCIMB 400.</title>
        <authorList>
            <consortium name="US DOE Joint Genome Institute"/>
            <person name="Copeland A."/>
            <person name="Lucas S."/>
            <person name="Lapidus A."/>
            <person name="Barry K."/>
            <person name="Detter J.C."/>
            <person name="Glavina del Rio T."/>
            <person name="Hammon N."/>
            <person name="Israni S."/>
            <person name="Dalin E."/>
            <person name="Tice H."/>
            <person name="Pitluck S."/>
            <person name="Fredrickson J.K."/>
            <person name="Kolker E."/>
            <person name="McCuel L.A."/>
            <person name="DiChristina T."/>
            <person name="Nealson K.H."/>
            <person name="Newman D."/>
            <person name="Tiedje J.M."/>
            <person name="Zhou J."/>
            <person name="Romine M.F."/>
            <person name="Culley D.E."/>
            <person name="Serres M."/>
            <person name="Chertkov O."/>
            <person name="Brettin T."/>
            <person name="Bruce D."/>
            <person name="Han C."/>
            <person name="Tapia R."/>
            <person name="Gilna P."/>
            <person name="Schmutz J."/>
            <person name="Larimer F."/>
            <person name="Land M."/>
            <person name="Hauser L."/>
            <person name="Kyrpides N."/>
            <person name="Mikhailova N."/>
            <person name="Richardson P."/>
        </authorList>
    </citation>
    <scope>NUCLEOTIDE SEQUENCE [LARGE SCALE GENOMIC DNA]</scope>
    <source>
        <strain>NCIMB 400</strain>
    </source>
</reference>
<evidence type="ECO:0000255" key="1">
    <source>
        <dbReference type="HAMAP-Rule" id="MF_00073"/>
    </source>
</evidence>
<sequence>MKPSERRKARRLAVQAIYSWQLSQNKVADVEHEFLTEQNTDGVDVAYFRELLTGVASKTSQIDELLKPHLDRKFEEVSPVEKAIVRLATYELTFRKDVPFKVAINEGIELAKAFGAEDSHKFVNGLLDKLVKHK</sequence>
<protein>
    <recommendedName>
        <fullName evidence="1">Transcription antitermination protein NusB</fullName>
    </recommendedName>
    <alternativeName>
        <fullName evidence="1">Antitermination factor NusB</fullName>
    </alternativeName>
</protein>
<gene>
    <name evidence="1" type="primary">nusB</name>
    <name type="ordered locus">Sfri_1039</name>
</gene>
<feature type="chain" id="PRO_0000265589" description="Transcription antitermination protein NusB">
    <location>
        <begin position="1"/>
        <end position="134"/>
    </location>
</feature>
<dbReference type="EMBL" id="CP000447">
    <property type="protein sequence ID" value="ABI70892.1"/>
    <property type="molecule type" value="Genomic_DNA"/>
</dbReference>
<dbReference type="RefSeq" id="WP_011636513.1">
    <property type="nucleotide sequence ID" value="NC_008345.1"/>
</dbReference>
<dbReference type="SMR" id="Q086C3"/>
<dbReference type="STRING" id="318167.Sfri_1039"/>
<dbReference type="KEGG" id="sfr:Sfri_1039"/>
<dbReference type="eggNOG" id="COG0781">
    <property type="taxonomic scope" value="Bacteria"/>
</dbReference>
<dbReference type="HOGENOM" id="CLU_087843_4_1_6"/>
<dbReference type="OrthoDB" id="9789556at2"/>
<dbReference type="Proteomes" id="UP000000684">
    <property type="component" value="Chromosome"/>
</dbReference>
<dbReference type="GO" id="GO:0005829">
    <property type="term" value="C:cytosol"/>
    <property type="evidence" value="ECO:0007669"/>
    <property type="project" value="TreeGrafter"/>
</dbReference>
<dbReference type="GO" id="GO:0003723">
    <property type="term" value="F:RNA binding"/>
    <property type="evidence" value="ECO:0007669"/>
    <property type="project" value="UniProtKB-UniRule"/>
</dbReference>
<dbReference type="GO" id="GO:0006353">
    <property type="term" value="P:DNA-templated transcription termination"/>
    <property type="evidence" value="ECO:0007669"/>
    <property type="project" value="UniProtKB-UniRule"/>
</dbReference>
<dbReference type="GO" id="GO:0031564">
    <property type="term" value="P:transcription antitermination"/>
    <property type="evidence" value="ECO:0007669"/>
    <property type="project" value="UniProtKB-KW"/>
</dbReference>
<dbReference type="CDD" id="cd00619">
    <property type="entry name" value="Terminator_NusB"/>
    <property type="match status" value="1"/>
</dbReference>
<dbReference type="FunFam" id="1.10.940.10:FF:000001">
    <property type="entry name" value="Transcription antitermination factor NusB"/>
    <property type="match status" value="1"/>
</dbReference>
<dbReference type="Gene3D" id="1.10.940.10">
    <property type="entry name" value="NusB-like"/>
    <property type="match status" value="1"/>
</dbReference>
<dbReference type="HAMAP" id="MF_00073">
    <property type="entry name" value="NusB"/>
    <property type="match status" value="1"/>
</dbReference>
<dbReference type="InterPro" id="IPR035926">
    <property type="entry name" value="NusB-like_sf"/>
</dbReference>
<dbReference type="InterPro" id="IPR011605">
    <property type="entry name" value="NusB_fam"/>
</dbReference>
<dbReference type="InterPro" id="IPR006027">
    <property type="entry name" value="NusB_RsmB_TIM44"/>
</dbReference>
<dbReference type="NCBIfam" id="TIGR01951">
    <property type="entry name" value="nusB"/>
    <property type="match status" value="1"/>
</dbReference>
<dbReference type="PANTHER" id="PTHR11078:SF3">
    <property type="entry name" value="ANTITERMINATION NUSB DOMAIN-CONTAINING PROTEIN"/>
    <property type="match status" value="1"/>
</dbReference>
<dbReference type="PANTHER" id="PTHR11078">
    <property type="entry name" value="N UTILIZATION SUBSTANCE PROTEIN B-RELATED"/>
    <property type="match status" value="1"/>
</dbReference>
<dbReference type="Pfam" id="PF01029">
    <property type="entry name" value="NusB"/>
    <property type="match status" value="1"/>
</dbReference>
<dbReference type="SUPFAM" id="SSF48013">
    <property type="entry name" value="NusB-like"/>
    <property type="match status" value="1"/>
</dbReference>
<name>NUSB_SHEFN</name>
<accession>Q086C3</accession>
<keyword id="KW-1185">Reference proteome</keyword>
<keyword id="KW-0694">RNA-binding</keyword>
<keyword id="KW-0804">Transcription</keyword>
<keyword id="KW-0889">Transcription antitermination</keyword>
<keyword id="KW-0805">Transcription regulation</keyword>